<sequence>MTQHDRLLIIDFGSQVTQLIARRLRELNVYCEIHPYQNVTEAFLKGFAPKAVIFSGGPSSVFAEGAPMPPACVFEMGVPILGICYGQQVMMHCLGGKVERGHGTAEFGRAFVTPAEGRLAILDGWFEDGREQVWMSHGDHVSQIAPGFQVFGTSPNAPFAITADPARHFYAVQFHPEVHHTPKGAKLYENFVKLAGFKGDWTMGAYREEAIAKIRAQVGDQKVICGLSGGVDSSVAAVLIHEAIGDQLTCVFVDHGLLRLGEAEQVVTMFRDHYNMPLIHADESDLFLGALEGVSDPEVKRKTIGRLFIDVFQKHAADVGGATFLAQGTLYPDVIESVSFSGGPSVTIKSHHNVGGLPEKMGLKLVEPLRELFKDEVRALGRELGLPDSFIGRHPFPGPGLAIRCPGEITREKLEILRQADAVYIDQIRRHGLYDEIWQAFVALLPVRTVGVMGDGRTYDYACALRAVTSVDGMTADYYPFTHEFLGETATRIINEVQGINRVTYDITSKPPGTIEWE</sequence>
<evidence type="ECO:0000255" key="1">
    <source>
        <dbReference type="HAMAP-Rule" id="MF_00344"/>
    </source>
</evidence>
<dbReference type="EC" id="6.3.5.2" evidence="1"/>
<dbReference type="EMBL" id="CP000661">
    <property type="protein sequence ID" value="ABP70758.1"/>
    <property type="molecule type" value="Genomic_DNA"/>
</dbReference>
<dbReference type="SMR" id="A4WTP4"/>
<dbReference type="STRING" id="349102.Rsph17025_1867"/>
<dbReference type="MEROPS" id="C26.957"/>
<dbReference type="KEGG" id="rsq:Rsph17025_1867"/>
<dbReference type="eggNOG" id="COG0518">
    <property type="taxonomic scope" value="Bacteria"/>
</dbReference>
<dbReference type="eggNOG" id="COG0519">
    <property type="taxonomic scope" value="Bacteria"/>
</dbReference>
<dbReference type="HOGENOM" id="CLU_014340_0_5_5"/>
<dbReference type="BioCyc" id="RSPH349102:G1G8M-1931-MONOMER"/>
<dbReference type="UniPathway" id="UPA00189">
    <property type="reaction ID" value="UER00296"/>
</dbReference>
<dbReference type="GO" id="GO:0005829">
    <property type="term" value="C:cytosol"/>
    <property type="evidence" value="ECO:0007669"/>
    <property type="project" value="TreeGrafter"/>
</dbReference>
<dbReference type="GO" id="GO:0005524">
    <property type="term" value="F:ATP binding"/>
    <property type="evidence" value="ECO:0007669"/>
    <property type="project" value="UniProtKB-UniRule"/>
</dbReference>
<dbReference type="GO" id="GO:0003921">
    <property type="term" value="F:GMP synthase activity"/>
    <property type="evidence" value="ECO:0007669"/>
    <property type="project" value="InterPro"/>
</dbReference>
<dbReference type="CDD" id="cd01742">
    <property type="entry name" value="GATase1_GMP_Synthase"/>
    <property type="match status" value="1"/>
</dbReference>
<dbReference type="CDD" id="cd01997">
    <property type="entry name" value="GMP_synthase_C"/>
    <property type="match status" value="1"/>
</dbReference>
<dbReference type="FunFam" id="3.30.300.10:FF:000002">
    <property type="entry name" value="GMP synthase [glutamine-hydrolyzing]"/>
    <property type="match status" value="1"/>
</dbReference>
<dbReference type="FunFam" id="3.40.50.620:FF:000001">
    <property type="entry name" value="GMP synthase [glutamine-hydrolyzing]"/>
    <property type="match status" value="1"/>
</dbReference>
<dbReference type="FunFam" id="3.40.50.880:FF:000001">
    <property type="entry name" value="GMP synthase [glutamine-hydrolyzing]"/>
    <property type="match status" value="1"/>
</dbReference>
<dbReference type="Gene3D" id="3.30.300.10">
    <property type="match status" value="1"/>
</dbReference>
<dbReference type="Gene3D" id="3.40.50.880">
    <property type="match status" value="1"/>
</dbReference>
<dbReference type="Gene3D" id="3.40.50.620">
    <property type="entry name" value="HUPs"/>
    <property type="match status" value="1"/>
</dbReference>
<dbReference type="HAMAP" id="MF_00344">
    <property type="entry name" value="GMP_synthase"/>
    <property type="match status" value="1"/>
</dbReference>
<dbReference type="InterPro" id="IPR029062">
    <property type="entry name" value="Class_I_gatase-like"/>
</dbReference>
<dbReference type="InterPro" id="IPR017926">
    <property type="entry name" value="GATASE"/>
</dbReference>
<dbReference type="InterPro" id="IPR001674">
    <property type="entry name" value="GMP_synth_C"/>
</dbReference>
<dbReference type="InterPro" id="IPR004739">
    <property type="entry name" value="GMP_synth_GATase"/>
</dbReference>
<dbReference type="InterPro" id="IPR022955">
    <property type="entry name" value="GMP_synthase"/>
</dbReference>
<dbReference type="InterPro" id="IPR025777">
    <property type="entry name" value="GMPS_ATP_PPase_dom"/>
</dbReference>
<dbReference type="InterPro" id="IPR022310">
    <property type="entry name" value="NAD/GMP_synthase"/>
</dbReference>
<dbReference type="InterPro" id="IPR014729">
    <property type="entry name" value="Rossmann-like_a/b/a_fold"/>
</dbReference>
<dbReference type="NCBIfam" id="TIGR00884">
    <property type="entry name" value="guaA_Cterm"/>
    <property type="match status" value="1"/>
</dbReference>
<dbReference type="NCBIfam" id="TIGR00888">
    <property type="entry name" value="guaA_Nterm"/>
    <property type="match status" value="1"/>
</dbReference>
<dbReference type="NCBIfam" id="NF000848">
    <property type="entry name" value="PRK00074.1"/>
    <property type="match status" value="1"/>
</dbReference>
<dbReference type="PANTHER" id="PTHR11922:SF2">
    <property type="entry name" value="GMP SYNTHASE [GLUTAMINE-HYDROLYZING]"/>
    <property type="match status" value="1"/>
</dbReference>
<dbReference type="PANTHER" id="PTHR11922">
    <property type="entry name" value="GMP SYNTHASE-RELATED"/>
    <property type="match status" value="1"/>
</dbReference>
<dbReference type="Pfam" id="PF00117">
    <property type="entry name" value="GATase"/>
    <property type="match status" value="1"/>
</dbReference>
<dbReference type="Pfam" id="PF00958">
    <property type="entry name" value="GMP_synt_C"/>
    <property type="match status" value="1"/>
</dbReference>
<dbReference type="Pfam" id="PF02540">
    <property type="entry name" value="NAD_synthase"/>
    <property type="match status" value="1"/>
</dbReference>
<dbReference type="PRINTS" id="PR00097">
    <property type="entry name" value="ANTSNTHASEII"/>
</dbReference>
<dbReference type="PRINTS" id="PR00096">
    <property type="entry name" value="GATASE"/>
</dbReference>
<dbReference type="SUPFAM" id="SSF52402">
    <property type="entry name" value="Adenine nucleotide alpha hydrolases-like"/>
    <property type="match status" value="1"/>
</dbReference>
<dbReference type="SUPFAM" id="SSF52317">
    <property type="entry name" value="Class I glutamine amidotransferase-like"/>
    <property type="match status" value="1"/>
</dbReference>
<dbReference type="SUPFAM" id="SSF54810">
    <property type="entry name" value="GMP synthetase C-terminal dimerisation domain"/>
    <property type="match status" value="1"/>
</dbReference>
<dbReference type="PROSITE" id="PS51273">
    <property type="entry name" value="GATASE_TYPE_1"/>
    <property type="match status" value="1"/>
</dbReference>
<dbReference type="PROSITE" id="PS51553">
    <property type="entry name" value="GMPS_ATP_PPASE"/>
    <property type="match status" value="1"/>
</dbReference>
<gene>
    <name evidence="1" type="primary">guaA</name>
    <name type="ordered locus">Rsph17025_1867</name>
</gene>
<name>GUAA_CERS5</name>
<comment type="function">
    <text evidence="1">Catalyzes the synthesis of GMP from XMP.</text>
</comment>
<comment type="catalytic activity">
    <reaction evidence="1">
        <text>XMP + L-glutamine + ATP + H2O = GMP + L-glutamate + AMP + diphosphate + 2 H(+)</text>
        <dbReference type="Rhea" id="RHEA:11680"/>
        <dbReference type="ChEBI" id="CHEBI:15377"/>
        <dbReference type="ChEBI" id="CHEBI:15378"/>
        <dbReference type="ChEBI" id="CHEBI:29985"/>
        <dbReference type="ChEBI" id="CHEBI:30616"/>
        <dbReference type="ChEBI" id="CHEBI:33019"/>
        <dbReference type="ChEBI" id="CHEBI:57464"/>
        <dbReference type="ChEBI" id="CHEBI:58115"/>
        <dbReference type="ChEBI" id="CHEBI:58359"/>
        <dbReference type="ChEBI" id="CHEBI:456215"/>
        <dbReference type="EC" id="6.3.5.2"/>
    </reaction>
</comment>
<comment type="pathway">
    <text evidence="1">Purine metabolism; GMP biosynthesis; GMP from XMP (L-Gln route): step 1/1.</text>
</comment>
<comment type="subunit">
    <text evidence="1">Homodimer.</text>
</comment>
<protein>
    <recommendedName>
        <fullName evidence="1">GMP synthase [glutamine-hydrolyzing]</fullName>
        <ecNumber evidence="1">6.3.5.2</ecNumber>
    </recommendedName>
    <alternativeName>
        <fullName evidence="1">GMP synthetase</fullName>
    </alternativeName>
    <alternativeName>
        <fullName evidence="1">Glutamine amidotransferase</fullName>
    </alternativeName>
</protein>
<organism>
    <name type="scientific">Cereibacter sphaeroides (strain ATCC 17025 / ATH 2.4.3)</name>
    <name type="common">Rhodobacter sphaeroides</name>
    <dbReference type="NCBI Taxonomy" id="349102"/>
    <lineage>
        <taxon>Bacteria</taxon>
        <taxon>Pseudomonadati</taxon>
        <taxon>Pseudomonadota</taxon>
        <taxon>Alphaproteobacteria</taxon>
        <taxon>Rhodobacterales</taxon>
        <taxon>Paracoccaceae</taxon>
        <taxon>Cereibacter</taxon>
    </lineage>
</organism>
<feature type="chain" id="PRO_1000120384" description="GMP synthase [glutamine-hydrolyzing]">
    <location>
        <begin position="1"/>
        <end position="518"/>
    </location>
</feature>
<feature type="domain" description="Glutamine amidotransferase type-1" evidence="1">
    <location>
        <begin position="6"/>
        <end position="200"/>
    </location>
</feature>
<feature type="domain" description="GMPS ATP-PPase" evidence="1">
    <location>
        <begin position="201"/>
        <end position="393"/>
    </location>
</feature>
<feature type="active site" description="Nucleophile" evidence="1">
    <location>
        <position position="84"/>
    </location>
</feature>
<feature type="active site" evidence="1">
    <location>
        <position position="175"/>
    </location>
</feature>
<feature type="active site" evidence="1">
    <location>
        <position position="177"/>
    </location>
</feature>
<feature type="binding site" evidence="1">
    <location>
        <begin position="228"/>
        <end position="234"/>
    </location>
    <ligand>
        <name>ATP</name>
        <dbReference type="ChEBI" id="CHEBI:30616"/>
    </ligand>
</feature>
<keyword id="KW-0067">ATP-binding</keyword>
<keyword id="KW-0315">Glutamine amidotransferase</keyword>
<keyword id="KW-0332">GMP biosynthesis</keyword>
<keyword id="KW-0436">Ligase</keyword>
<keyword id="KW-0547">Nucleotide-binding</keyword>
<keyword id="KW-0658">Purine biosynthesis</keyword>
<accession>A4WTP4</accession>
<proteinExistence type="inferred from homology"/>
<reference key="1">
    <citation type="submission" date="2007-04" db="EMBL/GenBank/DDBJ databases">
        <title>Complete sequence of chromosome of Rhodobacter sphaeroides ATCC 17025.</title>
        <authorList>
            <consortium name="US DOE Joint Genome Institute"/>
            <person name="Copeland A."/>
            <person name="Lucas S."/>
            <person name="Lapidus A."/>
            <person name="Barry K."/>
            <person name="Detter J.C."/>
            <person name="Glavina del Rio T."/>
            <person name="Hammon N."/>
            <person name="Israni S."/>
            <person name="Dalin E."/>
            <person name="Tice H."/>
            <person name="Pitluck S."/>
            <person name="Chertkov O."/>
            <person name="Brettin T."/>
            <person name="Bruce D."/>
            <person name="Han C."/>
            <person name="Schmutz J."/>
            <person name="Larimer F."/>
            <person name="Land M."/>
            <person name="Hauser L."/>
            <person name="Kyrpides N."/>
            <person name="Kim E."/>
            <person name="Richardson P."/>
            <person name="Mackenzie C."/>
            <person name="Choudhary M."/>
            <person name="Donohue T.J."/>
            <person name="Kaplan S."/>
        </authorList>
    </citation>
    <scope>NUCLEOTIDE SEQUENCE [LARGE SCALE GENOMIC DNA]</scope>
    <source>
        <strain>ATCC 17025 / ATH 2.4.3</strain>
    </source>
</reference>